<comment type="function">
    <text evidence="5">The small GTPases Rab are key regulators of intracellular membrane trafficking, from the formation of transport vesicles to their fusion with membranes. Rabs cycle between an inactive GDP-bound form and an active GTP-bound form that is able to recruit to membranes different sets of downstream effectors directly responsible for vesicle formation, movement, tethering and fusion (PubMed:23936529). RAB41 is required for normal Golgi ribbon organization and ER-to-Golgi trafficking (PubMed:23936529).</text>
</comment>
<comment type="catalytic activity">
    <reaction evidence="1">
        <text>GTP + H2O = GDP + phosphate + H(+)</text>
        <dbReference type="Rhea" id="RHEA:19669"/>
        <dbReference type="ChEBI" id="CHEBI:15377"/>
        <dbReference type="ChEBI" id="CHEBI:15378"/>
        <dbReference type="ChEBI" id="CHEBI:37565"/>
        <dbReference type="ChEBI" id="CHEBI:43474"/>
        <dbReference type="ChEBI" id="CHEBI:58189"/>
        <dbReference type="EC" id="3.6.5.2"/>
    </reaction>
    <physiologicalReaction direction="left-to-right" evidence="1">
        <dbReference type="Rhea" id="RHEA:19670"/>
    </physiologicalReaction>
</comment>
<comment type="cofactor">
    <cofactor evidence="1">
        <name>Mg(2+)</name>
        <dbReference type="ChEBI" id="CHEBI:18420"/>
    </cofactor>
</comment>
<comment type="activity regulation">
    <text evidence="1">Regulated by guanine nucleotide exchange factors (GEFs) which promote the exchange of bound GDP for free GTP. Regulated by GTPase activating proteins (GAPs) which increase the GTP hydrolysis activity. Inhibited by GDP dissociation inhibitors (GDIs).</text>
</comment>
<comment type="interaction">
    <interactant intactId="EBI-10244509">
        <id>Q5JT25</id>
    </interactant>
    <interactant intactId="EBI-716663">
        <id>P53041</id>
        <label>PPP5C</label>
    </interactant>
    <organismsDiffer>false</organismsDiffer>
    <experiments>2</experiments>
</comment>
<comment type="interaction">
    <interactant intactId="EBI-10244509">
        <id>Q5JT25</id>
    </interactant>
    <interactant intactId="EBI-307352">
        <id>Q04864</id>
        <label>REL</label>
    </interactant>
    <organismsDiffer>false</organismsDiffer>
    <experiments>3</experiments>
</comment>
<comment type="interaction">
    <interactant intactId="EBI-10244509">
        <id>Q5JT25</id>
    </interactant>
    <interactant intactId="EBI-533224">
        <id>P15884</id>
        <label>TCF4</label>
    </interactant>
    <organismsDiffer>false</organismsDiffer>
    <experiments>3</experiments>
</comment>
<comment type="interaction">
    <interactant intactId="EBI-12315199">
        <id>Q5JT25-2</id>
    </interactant>
    <interactant intactId="EBI-16439278">
        <id>Q6FHY5</id>
        <label>MEOX2</label>
    </interactant>
    <organismsDiffer>false</organismsDiffer>
    <experiments>3</experiments>
</comment>
<comment type="interaction">
    <interactant intactId="EBI-12315199">
        <id>Q5JT25-2</id>
    </interactant>
    <interactant intactId="EBI-742388">
        <id>Q9H8W4</id>
        <label>PLEKHF2</label>
    </interactant>
    <organismsDiffer>false</organismsDiffer>
    <experiments>3</experiments>
</comment>
<comment type="subcellular location">
    <subcellularLocation>
        <location evidence="5">Cytoplasm</location>
    </subcellularLocation>
    <text>punctate localization concentrated in ruffled regions at the cell periphery.</text>
</comment>
<comment type="alternative products">
    <event type="alternative splicing"/>
    <isoform>
        <id>Q5JT25-1</id>
        <name>1</name>
        <sequence type="displayed"/>
    </isoform>
    <isoform>
        <id>Q5JT25-2</id>
        <name>2</name>
        <sequence type="described" ref="VSP_037051"/>
    </isoform>
</comment>
<comment type="tissue specificity">
    <text evidence="4">Widely expressed in brain, testis, lung, heart, ovary, colon, kidney, uterus and spleen but not in liver.</text>
</comment>
<comment type="domain">
    <text evidence="1">Switch I, switch II and the interswitch regions are characteristic of Rab GTPases and mediate the interactions with Rab downstream effectors. The switch regions undergo conformational changes upon nucleotide binding which drives interaction with specific sets of effector proteins, with most effectors only binding to GTP-bound Rab.</text>
</comment>
<comment type="similarity">
    <text evidence="7">Belongs to the small GTPase superfamily. Rab family.</text>
</comment>
<organism>
    <name type="scientific">Homo sapiens</name>
    <name type="common">Human</name>
    <dbReference type="NCBI Taxonomy" id="9606"/>
    <lineage>
        <taxon>Eukaryota</taxon>
        <taxon>Metazoa</taxon>
        <taxon>Chordata</taxon>
        <taxon>Craniata</taxon>
        <taxon>Vertebrata</taxon>
        <taxon>Euteleostomi</taxon>
        <taxon>Mammalia</taxon>
        <taxon>Eutheria</taxon>
        <taxon>Euarchontoglires</taxon>
        <taxon>Primates</taxon>
        <taxon>Haplorrhini</taxon>
        <taxon>Catarrhini</taxon>
        <taxon>Hominidae</taxon>
        <taxon>Homo</taxon>
    </lineage>
</organism>
<proteinExistence type="evidence at protein level"/>
<sequence length="222" mass="25038">MSAFGHDEAWMEAGGFGLEAAERTEYQSLCKSKLLFLGEQSVGKTSIISRFMYNSFGCACQATVGIDFLSKTMYLEDQIVQLQLWDTAGQERFHSLIPSYIRDSTIAVVVYDITNINSFKETDKWVEHVRAERGDDVVIMLLGNKIDLDNKRQVTAEQGEEKSRNLNVMFIETSAKTGYNVKKLFRRVASALLSTRTSPPPKEGTVEIELESFEESGNRSYC</sequence>
<evidence type="ECO:0000250" key="1">
    <source>
        <dbReference type="UniProtKB" id="P20340"/>
    </source>
</evidence>
<evidence type="ECO:0000250" key="2">
    <source>
        <dbReference type="UniProtKB" id="P62820"/>
    </source>
</evidence>
<evidence type="ECO:0000255" key="3">
    <source>
        <dbReference type="PROSITE-ProRule" id="PRU00753"/>
    </source>
</evidence>
<evidence type="ECO:0000269" key="4">
    <source>
    </source>
</evidence>
<evidence type="ECO:0000269" key="5">
    <source>
    </source>
</evidence>
<evidence type="ECO:0000303" key="6">
    <source>
    </source>
</evidence>
<evidence type="ECO:0000305" key="7"/>
<evidence type="ECO:0000312" key="8">
    <source>
        <dbReference type="HGNC" id="HGNC:18293"/>
    </source>
</evidence>
<protein>
    <recommendedName>
        <fullName>Ras-related protein Rab-41</fullName>
        <ecNumber evidence="1">3.6.5.2</ecNumber>
    </recommendedName>
</protein>
<dbReference type="EC" id="3.6.5.2" evidence="1"/>
<dbReference type="EMBL" id="AL357752">
    <property type="status" value="NOT_ANNOTATED_CDS"/>
    <property type="molecule type" value="Genomic_DNA"/>
</dbReference>
<dbReference type="EMBL" id="BC117239">
    <property type="protein sequence ID" value="AAI17240.1"/>
    <property type="molecule type" value="mRNA"/>
</dbReference>
<dbReference type="CCDS" id="CCDS35322.2">
    <molecule id="Q5JT25-2"/>
</dbReference>
<dbReference type="CCDS" id="CCDS87756.1">
    <molecule id="Q5JT25-1"/>
</dbReference>
<dbReference type="RefSeq" id="NP_001027898.2">
    <molecule id="Q5JT25-2"/>
    <property type="nucleotide sequence ID" value="NM_001032726.3"/>
</dbReference>
<dbReference type="RefSeq" id="NP_001350736.1">
    <molecule id="Q5JT25-1"/>
    <property type="nucleotide sequence ID" value="NM_001363807.1"/>
</dbReference>
<dbReference type="RefSeq" id="XP_016884977.1">
    <property type="nucleotide sequence ID" value="XM_017029488.1"/>
</dbReference>
<dbReference type="SMR" id="Q5JT25"/>
<dbReference type="BioGRID" id="131446">
    <property type="interactions" value="8"/>
</dbReference>
<dbReference type="FunCoup" id="Q5JT25">
    <property type="interactions" value="65"/>
</dbReference>
<dbReference type="IntAct" id="Q5JT25">
    <property type="interactions" value="7"/>
</dbReference>
<dbReference type="STRING" id="9606.ENSP00000363597"/>
<dbReference type="iPTMnet" id="Q5JT25"/>
<dbReference type="PhosphoSitePlus" id="Q5JT25"/>
<dbReference type="BioMuta" id="RAB41"/>
<dbReference type="jPOST" id="Q5JT25"/>
<dbReference type="MassIVE" id="Q5JT25"/>
<dbReference type="PaxDb" id="9606-ENSP00000276066"/>
<dbReference type="PeptideAtlas" id="Q5JT25"/>
<dbReference type="ProteomicsDB" id="63193">
    <molecule id="Q5JT25-1"/>
</dbReference>
<dbReference type="ProteomicsDB" id="63194">
    <molecule id="Q5JT25-2"/>
</dbReference>
<dbReference type="Antibodypedia" id="422">
    <property type="antibodies" value="159 antibodies from 28 providers"/>
</dbReference>
<dbReference type="DNASU" id="347517"/>
<dbReference type="Ensembl" id="ENST00000276066.4">
    <molecule id="Q5JT25-2"/>
    <property type="protein sequence ID" value="ENSP00000276066.4"/>
    <property type="gene ID" value="ENSG00000147127.8"/>
</dbReference>
<dbReference type="Ensembl" id="ENST00000374473.6">
    <molecule id="Q5JT25-1"/>
    <property type="protein sequence ID" value="ENSP00000363597.2"/>
    <property type="gene ID" value="ENSG00000147127.8"/>
</dbReference>
<dbReference type="GeneID" id="347517"/>
<dbReference type="KEGG" id="hsa:347517"/>
<dbReference type="MANE-Select" id="ENST00000374473.6">
    <property type="protein sequence ID" value="ENSP00000363597.2"/>
    <property type="RefSeq nucleotide sequence ID" value="NM_001363807.1"/>
    <property type="RefSeq protein sequence ID" value="NP_001350736.1"/>
</dbReference>
<dbReference type="UCSC" id="uc010nkv.3">
    <molecule id="Q5JT25-1"/>
    <property type="organism name" value="human"/>
</dbReference>
<dbReference type="AGR" id="HGNC:18293"/>
<dbReference type="CTD" id="347517"/>
<dbReference type="DisGeNET" id="347517"/>
<dbReference type="GeneCards" id="RAB41"/>
<dbReference type="HGNC" id="HGNC:18293">
    <property type="gene designation" value="RAB41"/>
</dbReference>
<dbReference type="HPA" id="ENSG00000147127">
    <property type="expression patterns" value="Tissue enriched (retina)"/>
</dbReference>
<dbReference type="neXtProt" id="NX_Q5JT25"/>
<dbReference type="PharmGKB" id="PA34140"/>
<dbReference type="VEuPathDB" id="HostDB:ENSG00000147127"/>
<dbReference type="eggNOG" id="KOG0094">
    <property type="taxonomic scope" value="Eukaryota"/>
</dbReference>
<dbReference type="GeneTree" id="ENSGT00940000163684"/>
<dbReference type="HOGENOM" id="CLU_041217_10_2_1"/>
<dbReference type="InParanoid" id="Q5JT25"/>
<dbReference type="OMA" id="YDSFGCT"/>
<dbReference type="OrthoDB" id="63533at2759"/>
<dbReference type="PAN-GO" id="Q5JT25">
    <property type="GO annotations" value="7 GO annotations based on evolutionary models"/>
</dbReference>
<dbReference type="PhylomeDB" id="Q5JT25"/>
<dbReference type="TreeFam" id="TF300803"/>
<dbReference type="PathwayCommons" id="Q5JT25"/>
<dbReference type="Reactome" id="R-HSA-6811438">
    <property type="pathway name" value="Intra-Golgi traffic"/>
</dbReference>
<dbReference type="Reactome" id="R-HSA-8873719">
    <property type="pathway name" value="RAB geranylgeranylation"/>
</dbReference>
<dbReference type="SignaLink" id="Q5JT25"/>
<dbReference type="BioGRID-ORCS" id="347517">
    <property type="hits" value="22 hits in 769 CRISPR screens"/>
</dbReference>
<dbReference type="ChiTaRS" id="RAB41">
    <property type="organism name" value="human"/>
</dbReference>
<dbReference type="GenomeRNAi" id="347517"/>
<dbReference type="Pharos" id="Q5JT25">
    <property type="development level" value="Tdark"/>
</dbReference>
<dbReference type="PRO" id="PR:Q5JT25"/>
<dbReference type="Proteomes" id="UP000005640">
    <property type="component" value="Chromosome X"/>
</dbReference>
<dbReference type="RNAct" id="Q5JT25">
    <property type="molecule type" value="protein"/>
</dbReference>
<dbReference type="Bgee" id="ENSG00000147127">
    <property type="expression patterns" value="Expressed in male germ line stem cell (sensu Vertebrata) in testis and 97 other cell types or tissues"/>
</dbReference>
<dbReference type="ExpressionAtlas" id="Q5JT25">
    <property type="expression patterns" value="baseline and differential"/>
</dbReference>
<dbReference type="GO" id="GO:0005829">
    <property type="term" value="C:cytosol"/>
    <property type="evidence" value="ECO:0000314"/>
    <property type="project" value="HPA"/>
</dbReference>
<dbReference type="GO" id="GO:0012505">
    <property type="term" value="C:endomembrane system"/>
    <property type="evidence" value="ECO:0000318"/>
    <property type="project" value="GO_Central"/>
</dbReference>
<dbReference type="GO" id="GO:0005794">
    <property type="term" value="C:Golgi apparatus"/>
    <property type="evidence" value="ECO:0000318"/>
    <property type="project" value="GO_Central"/>
</dbReference>
<dbReference type="GO" id="GO:0000139">
    <property type="term" value="C:Golgi membrane"/>
    <property type="evidence" value="ECO:0000304"/>
    <property type="project" value="Reactome"/>
</dbReference>
<dbReference type="GO" id="GO:0043231">
    <property type="term" value="C:intracellular membrane-bounded organelle"/>
    <property type="evidence" value="ECO:0000314"/>
    <property type="project" value="HPA"/>
</dbReference>
<dbReference type="GO" id="GO:0005886">
    <property type="term" value="C:plasma membrane"/>
    <property type="evidence" value="ECO:0000314"/>
    <property type="project" value="HPA"/>
</dbReference>
<dbReference type="GO" id="GO:0005525">
    <property type="term" value="F:GTP binding"/>
    <property type="evidence" value="ECO:0007669"/>
    <property type="project" value="UniProtKB-KW"/>
</dbReference>
<dbReference type="GO" id="GO:0003924">
    <property type="term" value="F:GTPase activity"/>
    <property type="evidence" value="ECO:0000318"/>
    <property type="project" value="GO_Central"/>
</dbReference>
<dbReference type="GO" id="GO:0006891">
    <property type="term" value="P:intra-Golgi vesicle-mediated transport"/>
    <property type="evidence" value="ECO:0000318"/>
    <property type="project" value="GO_Central"/>
</dbReference>
<dbReference type="GO" id="GO:0006886">
    <property type="term" value="P:intracellular protein transport"/>
    <property type="evidence" value="ECO:0000318"/>
    <property type="project" value="GO_Central"/>
</dbReference>
<dbReference type="GO" id="GO:1903292">
    <property type="term" value="P:protein localization to Golgi membrane"/>
    <property type="evidence" value="ECO:0000318"/>
    <property type="project" value="GO_Central"/>
</dbReference>
<dbReference type="GO" id="GO:0042147">
    <property type="term" value="P:retrograde transport, endosome to Golgi"/>
    <property type="evidence" value="ECO:0000318"/>
    <property type="project" value="GO_Central"/>
</dbReference>
<dbReference type="GO" id="GO:0006890">
    <property type="term" value="P:retrograde vesicle-mediated transport, Golgi to endoplasmic reticulum"/>
    <property type="evidence" value="ECO:0000318"/>
    <property type="project" value="GO_Central"/>
</dbReference>
<dbReference type="CDD" id="cd01861">
    <property type="entry name" value="Rab6"/>
    <property type="match status" value="1"/>
</dbReference>
<dbReference type="FunFam" id="3.40.50.300:FF:000970">
    <property type="entry name" value="Ras-related protein Rab-6"/>
    <property type="match status" value="1"/>
</dbReference>
<dbReference type="Gene3D" id="3.40.50.300">
    <property type="entry name" value="P-loop containing nucleotide triphosphate hydrolases"/>
    <property type="match status" value="1"/>
</dbReference>
<dbReference type="InterPro" id="IPR027417">
    <property type="entry name" value="P-loop_NTPase"/>
</dbReference>
<dbReference type="InterPro" id="IPR050227">
    <property type="entry name" value="Rab"/>
</dbReference>
<dbReference type="InterPro" id="IPR005225">
    <property type="entry name" value="Small_GTP-bd"/>
</dbReference>
<dbReference type="InterPro" id="IPR001806">
    <property type="entry name" value="Small_GTPase"/>
</dbReference>
<dbReference type="NCBIfam" id="TIGR00231">
    <property type="entry name" value="small_GTP"/>
    <property type="match status" value="1"/>
</dbReference>
<dbReference type="PANTHER" id="PTHR47977">
    <property type="entry name" value="RAS-RELATED PROTEIN RAB"/>
    <property type="match status" value="1"/>
</dbReference>
<dbReference type="Pfam" id="PF00071">
    <property type="entry name" value="Ras"/>
    <property type="match status" value="1"/>
</dbReference>
<dbReference type="PRINTS" id="PR00449">
    <property type="entry name" value="RASTRNSFRMNG"/>
</dbReference>
<dbReference type="SMART" id="SM00175">
    <property type="entry name" value="RAB"/>
    <property type="match status" value="1"/>
</dbReference>
<dbReference type="SMART" id="SM00176">
    <property type="entry name" value="RAN"/>
    <property type="match status" value="1"/>
</dbReference>
<dbReference type="SMART" id="SM00173">
    <property type="entry name" value="RAS"/>
    <property type="match status" value="1"/>
</dbReference>
<dbReference type="SMART" id="SM00174">
    <property type="entry name" value="RHO"/>
    <property type="match status" value="1"/>
</dbReference>
<dbReference type="SUPFAM" id="SSF52540">
    <property type="entry name" value="P-loop containing nucleoside triphosphate hydrolases"/>
    <property type="match status" value="1"/>
</dbReference>
<dbReference type="PROSITE" id="PS51419">
    <property type="entry name" value="RAB"/>
    <property type="match status" value="1"/>
</dbReference>
<accession>Q5JT25</accession>
<accession>Q17RQ0</accession>
<keyword id="KW-0025">Alternative splicing</keyword>
<keyword id="KW-0963">Cytoplasm</keyword>
<keyword id="KW-0342">GTP-binding</keyword>
<keyword id="KW-0378">Hydrolase</keyword>
<keyword id="KW-0449">Lipoprotein</keyword>
<keyword id="KW-0460">Magnesium</keyword>
<keyword id="KW-0479">Metal-binding</keyword>
<keyword id="KW-0547">Nucleotide-binding</keyword>
<keyword id="KW-0636">Prenylation</keyword>
<keyword id="KW-1267">Proteomics identification</keyword>
<keyword id="KW-1185">Reference proteome</keyword>
<feature type="chain" id="PRO_0000244618" description="Ras-related protein Rab-41">
    <location>
        <begin position="1"/>
        <end position="222"/>
    </location>
</feature>
<feature type="region of interest" description="Switch-I" evidence="3">
    <location>
        <begin position="58"/>
        <end position="66"/>
    </location>
</feature>
<feature type="region of interest" description="Switch-II" evidence="3">
    <location>
        <begin position="89"/>
        <end position="105"/>
    </location>
</feature>
<feature type="binding site" evidence="1">
    <location>
        <position position="41"/>
    </location>
    <ligand>
        <name>GTP</name>
        <dbReference type="ChEBI" id="CHEBI:37565"/>
    </ligand>
</feature>
<feature type="binding site" evidence="1">
    <location>
        <position position="42"/>
    </location>
    <ligand>
        <name>GTP</name>
        <dbReference type="ChEBI" id="CHEBI:37565"/>
    </ligand>
</feature>
<feature type="binding site" evidence="1">
    <location>
        <position position="43"/>
    </location>
    <ligand>
        <name>GTP</name>
        <dbReference type="ChEBI" id="CHEBI:37565"/>
    </ligand>
</feature>
<feature type="binding site" evidence="1">
    <location>
        <position position="44"/>
    </location>
    <ligand>
        <name>GTP</name>
        <dbReference type="ChEBI" id="CHEBI:37565"/>
    </ligand>
</feature>
<feature type="binding site" evidence="1">
    <location>
        <position position="45"/>
    </location>
    <ligand>
        <name>GTP</name>
        <dbReference type="ChEBI" id="CHEBI:37565"/>
    </ligand>
</feature>
<feature type="binding site" evidence="1">
    <location>
        <position position="45"/>
    </location>
    <ligand>
        <name>Mg(2+)</name>
        <dbReference type="ChEBI" id="CHEBI:18420"/>
    </ligand>
</feature>
<feature type="binding site" evidence="1">
    <location>
        <position position="46"/>
    </location>
    <ligand>
        <name>GTP</name>
        <dbReference type="ChEBI" id="CHEBI:37565"/>
    </ligand>
</feature>
<feature type="binding site" evidence="1">
    <location>
        <position position="63"/>
    </location>
    <ligand>
        <name>GTP</name>
        <dbReference type="ChEBI" id="CHEBI:37565"/>
    </ligand>
</feature>
<feature type="binding site" evidence="1">
    <location>
        <position position="63"/>
    </location>
    <ligand>
        <name>Mg(2+)</name>
        <dbReference type="ChEBI" id="CHEBI:18420"/>
    </ligand>
</feature>
<feature type="binding site" evidence="1">
    <location>
        <position position="86"/>
    </location>
    <ligand>
        <name>Mg(2+)</name>
        <dbReference type="ChEBI" id="CHEBI:18420"/>
    </ligand>
</feature>
<feature type="binding site" evidence="1">
    <location>
        <position position="89"/>
    </location>
    <ligand>
        <name>GTP</name>
        <dbReference type="ChEBI" id="CHEBI:37565"/>
    </ligand>
</feature>
<feature type="binding site" evidence="1">
    <location>
        <position position="144"/>
    </location>
    <ligand>
        <name>GTP</name>
        <dbReference type="ChEBI" id="CHEBI:37565"/>
    </ligand>
</feature>
<feature type="binding site" evidence="1">
    <location>
        <position position="145"/>
    </location>
    <ligand>
        <name>GTP</name>
        <dbReference type="ChEBI" id="CHEBI:37565"/>
    </ligand>
</feature>
<feature type="binding site" evidence="1">
    <location>
        <position position="147"/>
    </location>
    <ligand>
        <name>GTP</name>
        <dbReference type="ChEBI" id="CHEBI:37565"/>
    </ligand>
</feature>
<feature type="binding site" evidence="1">
    <location>
        <position position="174"/>
    </location>
    <ligand>
        <name>GTP</name>
        <dbReference type="ChEBI" id="CHEBI:37565"/>
    </ligand>
</feature>
<feature type="binding site" evidence="1">
    <location>
        <position position="175"/>
    </location>
    <ligand>
        <name>GTP</name>
        <dbReference type="ChEBI" id="CHEBI:37565"/>
    </ligand>
</feature>
<feature type="binding site" evidence="1">
    <location>
        <position position="176"/>
    </location>
    <ligand>
        <name>GTP</name>
        <dbReference type="ChEBI" id="CHEBI:37565"/>
    </ligand>
</feature>
<feature type="lipid moiety-binding region" description="S-geranylgeranyl cysteine" evidence="2">
    <location>
        <position position="222"/>
    </location>
</feature>
<feature type="splice variant" id="VSP_037051" description="In isoform 2." evidence="6">
    <location>
        <position position="42"/>
    </location>
</feature>
<reference key="1">
    <citation type="journal article" date="2005" name="Nature">
        <title>The DNA sequence of the human X chromosome.</title>
        <authorList>
            <person name="Ross M.T."/>
            <person name="Grafham D.V."/>
            <person name="Coffey A.J."/>
            <person name="Scherer S."/>
            <person name="McLay K."/>
            <person name="Muzny D."/>
            <person name="Platzer M."/>
            <person name="Howell G.R."/>
            <person name="Burrows C."/>
            <person name="Bird C.P."/>
            <person name="Frankish A."/>
            <person name="Lovell F.L."/>
            <person name="Howe K.L."/>
            <person name="Ashurst J.L."/>
            <person name="Fulton R.S."/>
            <person name="Sudbrak R."/>
            <person name="Wen G."/>
            <person name="Jones M.C."/>
            <person name="Hurles M.E."/>
            <person name="Andrews T.D."/>
            <person name="Scott C.E."/>
            <person name="Searle S."/>
            <person name="Ramser J."/>
            <person name="Whittaker A."/>
            <person name="Deadman R."/>
            <person name="Carter N.P."/>
            <person name="Hunt S.E."/>
            <person name="Chen R."/>
            <person name="Cree A."/>
            <person name="Gunaratne P."/>
            <person name="Havlak P."/>
            <person name="Hodgson A."/>
            <person name="Metzker M.L."/>
            <person name="Richards S."/>
            <person name="Scott G."/>
            <person name="Steffen D."/>
            <person name="Sodergren E."/>
            <person name="Wheeler D.A."/>
            <person name="Worley K.C."/>
            <person name="Ainscough R."/>
            <person name="Ambrose K.D."/>
            <person name="Ansari-Lari M.A."/>
            <person name="Aradhya S."/>
            <person name="Ashwell R.I."/>
            <person name="Babbage A.K."/>
            <person name="Bagguley C.L."/>
            <person name="Ballabio A."/>
            <person name="Banerjee R."/>
            <person name="Barker G.E."/>
            <person name="Barlow K.F."/>
            <person name="Barrett I.P."/>
            <person name="Bates K.N."/>
            <person name="Beare D.M."/>
            <person name="Beasley H."/>
            <person name="Beasley O."/>
            <person name="Beck A."/>
            <person name="Bethel G."/>
            <person name="Blechschmidt K."/>
            <person name="Brady N."/>
            <person name="Bray-Allen S."/>
            <person name="Bridgeman A.M."/>
            <person name="Brown A.J."/>
            <person name="Brown M.J."/>
            <person name="Bonnin D."/>
            <person name="Bruford E.A."/>
            <person name="Buhay C."/>
            <person name="Burch P."/>
            <person name="Burford D."/>
            <person name="Burgess J."/>
            <person name="Burrill W."/>
            <person name="Burton J."/>
            <person name="Bye J.M."/>
            <person name="Carder C."/>
            <person name="Carrel L."/>
            <person name="Chako J."/>
            <person name="Chapman J.C."/>
            <person name="Chavez D."/>
            <person name="Chen E."/>
            <person name="Chen G."/>
            <person name="Chen Y."/>
            <person name="Chen Z."/>
            <person name="Chinault C."/>
            <person name="Ciccodicola A."/>
            <person name="Clark S.Y."/>
            <person name="Clarke G."/>
            <person name="Clee C.M."/>
            <person name="Clegg S."/>
            <person name="Clerc-Blankenburg K."/>
            <person name="Clifford K."/>
            <person name="Cobley V."/>
            <person name="Cole C.G."/>
            <person name="Conquer J.S."/>
            <person name="Corby N."/>
            <person name="Connor R.E."/>
            <person name="David R."/>
            <person name="Davies J."/>
            <person name="Davis C."/>
            <person name="Davis J."/>
            <person name="Delgado O."/>
            <person name="Deshazo D."/>
            <person name="Dhami P."/>
            <person name="Ding Y."/>
            <person name="Dinh H."/>
            <person name="Dodsworth S."/>
            <person name="Draper H."/>
            <person name="Dugan-Rocha S."/>
            <person name="Dunham A."/>
            <person name="Dunn M."/>
            <person name="Durbin K.J."/>
            <person name="Dutta I."/>
            <person name="Eades T."/>
            <person name="Ellwood M."/>
            <person name="Emery-Cohen A."/>
            <person name="Errington H."/>
            <person name="Evans K.L."/>
            <person name="Faulkner L."/>
            <person name="Francis F."/>
            <person name="Frankland J."/>
            <person name="Fraser A.E."/>
            <person name="Galgoczy P."/>
            <person name="Gilbert J."/>
            <person name="Gill R."/>
            <person name="Gloeckner G."/>
            <person name="Gregory S.G."/>
            <person name="Gribble S."/>
            <person name="Griffiths C."/>
            <person name="Grocock R."/>
            <person name="Gu Y."/>
            <person name="Gwilliam R."/>
            <person name="Hamilton C."/>
            <person name="Hart E.A."/>
            <person name="Hawes A."/>
            <person name="Heath P.D."/>
            <person name="Heitmann K."/>
            <person name="Hennig S."/>
            <person name="Hernandez J."/>
            <person name="Hinzmann B."/>
            <person name="Ho S."/>
            <person name="Hoffs M."/>
            <person name="Howden P.J."/>
            <person name="Huckle E.J."/>
            <person name="Hume J."/>
            <person name="Hunt P.J."/>
            <person name="Hunt A.R."/>
            <person name="Isherwood J."/>
            <person name="Jacob L."/>
            <person name="Johnson D."/>
            <person name="Jones S."/>
            <person name="de Jong P.J."/>
            <person name="Joseph S.S."/>
            <person name="Keenan S."/>
            <person name="Kelly S."/>
            <person name="Kershaw J.K."/>
            <person name="Khan Z."/>
            <person name="Kioschis P."/>
            <person name="Klages S."/>
            <person name="Knights A.J."/>
            <person name="Kosiura A."/>
            <person name="Kovar-Smith C."/>
            <person name="Laird G.K."/>
            <person name="Langford C."/>
            <person name="Lawlor S."/>
            <person name="Leversha M."/>
            <person name="Lewis L."/>
            <person name="Liu W."/>
            <person name="Lloyd C."/>
            <person name="Lloyd D.M."/>
            <person name="Loulseged H."/>
            <person name="Loveland J.E."/>
            <person name="Lovell J.D."/>
            <person name="Lozado R."/>
            <person name="Lu J."/>
            <person name="Lyne R."/>
            <person name="Ma J."/>
            <person name="Maheshwari M."/>
            <person name="Matthews L.H."/>
            <person name="McDowall J."/>
            <person name="McLaren S."/>
            <person name="McMurray A."/>
            <person name="Meidl P."/>
            <person name="Meitinger T."/>
            <person name="Milne S."/>
            <person name="Miner G."/>
            <person name="Mistry S.L."/>
            <person name="Morgan M."/>
            <person name="Morris S."/>
            <person name="Mueller I."/>
            <person name="Mullikin J.C."/>
            <person name="Nguyen N."/>
            <person name="Nordsiek G."/>
            <person name="Nyakatura G."/>
            <person name="O'dell C.N."/>
            <person name="Okwuonu G."/>
            <person name="Palmer S."/>
            <person name="Pandian R."/>
            <person name="Parker D."/>
            <person name="Parrish J."/>
            <person name="Pasternak S."/>
            <person name="Patel D."/>
            <person name="Pearce A.V."/>
            <person name="Pearson D.M."/>
            <person name="Pelan S.E."/>
            <person name="Perez L."/>
            <person name="Porter K.M."/>
            <person name="Ramsey Y."/>
            <person name="Reichwald K."/>
            <person name="Rhodes S."/>
            <person name="Ridler K.A."/>
            <person name="Schlessinger D."/>
            <person name="Schueler M.G."/>
            <person name="Sehra H.K."/>
            <person name="Shaw-Smith C."/>
            <person name="Shen H."/>
            <person name="Sheridan E.M."/>
            <person name="Shownkeen R."/>
            <person name="Skuce C.D."/>
            <person name="Smith M.L."/>
            <person name="Sotheran E.C."/>
            <person name="Steingruber H.E."/>
            <person name="Steward C.A."/>
            <person name="Storey R."/>
            <person name="Swann R.M."/>
            <person name="Swarbreck D."/>
            <person name="Tabor P.E."/>
            <person name="Taudien S."/>
            <person name="Taylor T."/>
            <person name="Teague B."/>
            <person name="Thomas K."/>
            <person name="Thorpe A."/>
            <person name="Timms K."/>
            <person name="Tracey A."/>
            <person name="Trevanion S."/>
            <person name="Tromans A.C."/>
            <person name="d'Urso M."/>
            <person name="Verduzco D."/>
            <person name="Villasana D."/>
            <person name="Waldron L."/>
            <person name="Wall M."/>
            <person name="Wang Q."/>
            <person name="Warren J."/>
            <person name="Warry G.L."/>
            <person name="Wei X."/>
            <person name="West A."/>
            <person name="Whitehead S.L."/>
            <person name="Whiteley M.N."/>
            <person name="Wilkinson J.E."/>
            <person name="Willey D.L."/>
            <person name="Williams G."/>
            <person name="Williams L."/>
            <person name="Williamson A."/>
            <person name="Williamson H."/>
            <person name="Wilming L."/>
            <person name="Woodmansey R.L."/>
            <person name="Wray P.W."/>
            <person name="Yen J."/>
            <person name="Zhang J."/>
            <person name="Zhou J."/>
            <person name="Zoghbi H."/>
            <person name="Zorilla S."/>
            <person name="Buck D."/>
            <person name="Reinhardt R."/>
            <person name="Poustka A."/>
            <person name="Rosenthal A."/>
            <person name="Lehrach H."/>
            <person name="Meindl A."/>
            <person name="Minx P.J."/>
            <person name="Hillier L.W."/>
            <person name="Willard H.F."/>
            <person name="Wilson R.K."/>
            <person name="Waterston R.H."/>
            <person name="Rice C.M."/>
            <person name="Vaudin M."/>
            <person name="Coulson A."/>
            <person name="Nelson D.L."/>
            <person name="Weinstock G."/>
            <person name="Sulston J.E."/>
            <person name="Durbin R.M."/>
            <person name="Hubbard T."/>
            <person name="Gibbs R.A."/>
            <person name="Beck S."/>
            <person name="Rogers J."/>
            <person name="Bentley D.R."/>
        </authorList>
    </citation>
    <scope>NUCLEOTIDE SEQUENCE [LARGE SCALE GENOMIC DNA]</scope>
</reference>
<reference key="2">
    <citation type="journal article" date="2004" name="Genome Res.">
        <title>The status, quality, and expansion of the NIH full-length cDNA project: the Mammalian Gene Collection (MGC).</title>
        <authorList>
            <consortium name="The MGC Project Team"/>
        </authorList>
    </citation>
    <scope>NUCLEOTIDE SEQUENCE [LARGE SCALE MRNA] (ISOFORM 2)</scope>
</reference>
<reference key="3">
    <citation type="journal article" date="2003" name="DNA Seq.">
        <title>Isolation, expression pattern of a novel human RAB gene RAB41 and characterization of its intronless homolog RAB41P.</title>
        <authorList>
            <person name="Guo J.H."/>
            <person name="Chen L."/>
            <person name="Chen S."/>
            <person name="Liu X."/>
            <person name="Saiyin H."/>
            <person name="Deng Q."/>
            <person name="Zhuang Y."/>
            <person name="Wan B."/>
            <person name="Yu L."/>
            <person name="Zhao S.Y."/>
        </authorList>
    </citation>
    <scope>TISSUE SPECIFICITY</scope>
</reference>
<reference key="4">
    <citation type="journal article" date="2013" name="PLoS ONE">
        <title>Rab41 is a novel regulator of Golgi apparatus organization that is needed for ER-to-Golgi trafficking and cell growth.</title>
        <authorList>
            <person name="Liu S."/>
            <person name="Hunt L."/>
            <person name="Storrie B."/>
        </authorList>
    </citation>
    <scope>FUNCTION</scope>
    <scope>SUBCELLULAR LOCATION</scope>
</reference>
<gene>
    <name evidence="8" type="primary">RAB41</name>
</gene>
<name>RAB41_HUMAN</name>